<accession>A5E181</accession>
<evidence type="ECO:0000250" key="1">
    <source>
        <dbReference type="UniProtKB" id="P38803"/>
    </source>
</evidence>
<evidence type="ECO:0000256" key="2">
    <source>
        <dbReference type="SAM" id="MobiDB-lite"/>
    </source>
</evidence>
<evidence type="ECO:0000305" key="3"/>
<protein>
    <recommendedName>
        <fullName>Pre-rRNA-processing protein IPI1</fullName>
    </recommendedName>
</protein>
<gene>
    <name type="primary">IPI1</name>
    <name type="ORF">LELG_03368</name>
</gene>
<sequence length="340" mass="38238">MGYKRKQKEKQKDFKKAKLKVGKTAKKPDNYTDTSFKAKTISLPGQSISIVHGSKDFTHQLSLLKHHSSTTRKEVVINITQNLPSNPAAYKLIISAAVPLILDESKLVRTEVMNLLKEIGSKQPGLLDLHKRSIVLFIISAMTHIQPDIRNTSTKFLATLLEYSDLKLYFVKILKNFFILMSWSLLDDNKSKGVSITTNSTILLGPNTKKARIDHLRVLVQFLKKNLLDDSEQGLVDADFSRIYTHPQTYKYLIPTTPQAFLALNLFGREIKSDLSATGSIAIQNLDTMTTEDIETRLNIMNDIFKDRMILNLKGLCKEGGEVGREASTCIDILEGISVK</sequence>
<organism>
    <name type="scientific">Lodderomyces elongisporus (strain ATCC 11503 / CBS 2605 / JCM 1781 / NBRC 1676 / NRRL YB-4239)</name>
    <name type="common">Yeast</name>
    <name type="synonym">Saccharomyces elongisporus</name>
    <dbReference type="NCBI Taxonomy" id="379508"/>
    <lineage>
        <taxon>Eukaryota</taxon>
        <taxon>Fungi</taxon>
        <taxon>Dikarya</taxon>
        <taxon>Ascomycota</taxon>
        <taxon>Saccharomycotina</taxon>
        <taxon>Pichiomycetes</taxon>
        <taxon>Debaryomycetaceae</taxon>
        <taxon>Candida/Lodderomyces clade</taxon>
        <taxon>Lodderomyces</taxon>
    </lineage>
</organism>
<dbReference type="EMBL" id="CH981527">
    <property type="protein sequence ID" value="EDK45189.1"/>
    <property type="molecule type" value="Genomic_DNA"/>
</dbReference>
<dbReference type="RefSeq" id="XP_001525440.1">
    <property type="nucleotide sequence ID" value="XM_001525390.1"/>
</dbReference>
<dbReference type="SMR" id="A5E181"/>
<dbReference type="FunCoup" id="A5E181">
    <property type="interactions" value="247"/>
</dbReference>
<dbReference type="STRING" id="379508.A5E181"/>
<dbReference type="GeneID" id="5232636"/>
<dbReference type="KEGG" id="lel:PVL30_002866"/>
<dbReference type="VEuPathDB" id="FungiDB:LELG_03368"/>
<dbReference type="eggNOG" id="KOG2149">
    <property type="taxonomic scope" value="Eukaryota"/>
</dbReference>
<dbReference type="HOGENOM" id="CLU_050252_2_0_1"/>
<dbReference type="InParanoid" id="A5E181"/>
<dbReference type="OMA" id="CAGGWVK"/>
<dbReference type="OrthoDB" id="361362at2759"/>
<dbReference type="Proteomes" id="UP000001996">
    <property type="component" value="Unassembled WGS sequence"/>
</dbReference>
<dbReference type="GO" id="GO:0005829">
    <property type="term" value="C:cytosol"/>
    <property type="evidence" value="ECO:0007669"/>
    <property type="project" value="EnsemblFungi"/>
</dbReference>
<dbReference type="GO" id="GO:0005654">
    <property type="term" value="C:nucleoplasm"/>
    <property type="evidence" value="ECO:0007669"/>
    <property type="project" value="EnsemblFungi"/>
</dbReference>
<dbReference type="GO" id="GO:0120330">
    <property type="term" value="C:rixosome complex"/>
    <property type="evidence" value="ECO:0007669"/>
    <property type="project" value="EnsemblFungi"/>
</dbReference>
<dbReference type="GO" id="GO:0003682">
    <property type="term" value="F:chromatin binding"/>
    <property type="evidence" value="ECO:0007669"/>
    <property type="project" value="EnsemblFungi"/>
</dbReference>
<dbReference type="GO" id="GO:0000463">
    <property type="term" value="P:maturation of LSU-rRNA from tricistronic rRNA transcript (SSU-rRNA, 5.8S rRNA, LSU-rRNA)"/>
    <property type="evidence" value="ECO:0007669"/>
    <property type="project" value="EnsemblFungi"/>
</dbReference>
<dbReference type="GO" id="GO:0006267">
    <property type="term" value="P:pre-replicative complex assembly involved in nuclear cell cycle DNA replication"/>
    <property type="evidence" value="ECO:0007669"/>
    <property type="project" value="EnsemblFungi"/>
</dbReference>
<dbReference type="GO" id="GO:0030174">
    <property type="term" value="P:regulation of DNA-templated DNA replication initiation"/>
    <property type="evidence" value="ECO:0007669"/>
    <property type="project" value="EnsemblFungi"/>
</dbReference>
<dbReference type="GO" id="GO:0000027">
    <property type="term" value="P:ribosomal large subunit assembly"/>
    <property type="evidence" value="ECO:0007669"/>
    <property type="project" value="EnsemblFungi"/>
</dbReference>
<dbReference type="Gene3D" id="1.25.10.10">
    <property type="entry name" value="Leucine-rich Repeat Variant"/>
    <property type="match status" value="1"/>
</dbReference>
<dbReference type="InterPro" id="IPR011989">
    <property type="entry name" value="ARM-like"/>
</dbReference>
<dbReference type="InterPro" id="IPR016024">
    <property type="entry name" value="ARM-type_fold"/>
</dbReference>
<dbReference type="InterPro" id="IPR024679">
    <property type="entry name" value="Ipi1_N"/>
</dbReference>
<dbReference type="PANTHER" id="PTHR16056">
    <property type="entry name" value="REGULATOR OF MICROTUBULE DYNAMICS PROTEIN"/>
    <property type="match status" value="1"/>
</dbReference>
<dbReference type="PANTHER" id="PTHR16056:SF2">
    <property type="entry name" value="TESTIS-EXPRESSED PROTEIN 10"/>
    <property type="match status" value="1"/>
</dbReference>
<dbReference type="Pfam" id="PF12333">
    <property type="entry name" value="Ipi1_N"/>
    <property type="match status" value="1"/>
</dbReference>
<dbReference type="SUPFAM" id="SSF48371">
    <property type="entry name" value="ARM repeat"/>
    <property type="match status" value="1"/>
</dbReference>
<proteinExistence type="inferred from homology"/>
<reference key="1">
    <citation type="journal article" date="2009" name="Nature">
        <title>Evolution of pathogenicity and sexual reproduction in eight Candida genomes.</title>
        <authorList>
            <person name="Butler G."/>
            <person name="Rasmussen M.D."/>
            <person name="Lin M.F."/>
            <person name="Santos M.A.S."/>
            <person name="Sakthikumar S."/>
            <person name="Munro C.A."/>
            <person name="Rheinbay E."/>
            <person name="Grabherr M."/>
            <person name="Forche A."/>
            <person name="Reedy J.L."/>
            <person name="Agrafioti I."/>
            <person name="Arnaud M.B."/>
            <person name="Bates S."/>
            <person name="Brown A.J.P."/>
            <person name="Brunke S."/>
            <person name="Costanzo M.C."/>
            <person name="Fitzpatrick D.A."/>
            <person name="de Groot P.W.J."/>
            <person name="Harris D."/>
            <person name="Hoyer L.L."/>
            <person name="Hube B."/>
            <person name="Klis F.M."/>
            <person name="Kodira C."/>
            <person name="Lennard N."/>
            <person name="Logue M.E."/>
            <person name="Martin R."/>
            <person name="Neiman A.M."/>
            <person name="Nikolaou E."/>
            <person name="Quail M.A."/>
            <person name="Quinn J."/>
            <person name="Santos M.C."/>
            <person name="Schmitzberger F.F."/>
            <person name="Sherlock G."/>
            <person name="Shah P."/>
            <person name="Silverstein K.A.T."/>
            <person name="Skrzypek M.S."/>
            <person name="Soll D."/>
            <person name="Staggs R."/>
            <person name="Stansfield I."/>
            <person name="Stumpf M.P.H."/>
            <person name="Sudbery P.E."/>
            <person name="Srikantha T."/>
            <person name="Zeng Q."/>
            <person name="Berman J."/>
            <person name="Berriman M."/>
            <person name="Heitman J."/>
            <person name="Gow N.A.R."/>
            <person name="Lorenz M.C."/>
            <person name="Birren B.W."/>
            <person name="Kellis M."/>
            <person name="Cuomo C.A."/>
        </authorList>
    </citation>
    <scope>NUCLEOTIDE SEQUENCE [LARGE SCALE GENOMIC DNA]</scope>
    <source>
        <strain>ATCC 11503 / BCRC 21390 / CBS 2605 / JCM 1781 / NBRC 1676 / NRRL YB-4239</strain>
    </source>
</reference>
<feature type="chain" id="PRO_0000308722" description="Pre-rRNA-processing protein IPI1">
    <location>
        <begin position="1"/>
        <end position="340"/>
    </location>
</feature>
<feature type="region of interest" description="Disordered" evidence="2">
    <location>
        <begin position="1"/>
        <end position="20"/>
    </location>
</feature>
<name>IPI1_LODEL</name>
<keyword id="KW-0539">Nucleus</keyword>
<keyword id="KW-1185">Reference proteome</keyword>
<keyword id="KW-0690">Ribosome biogenesis</keyword>
<keyword id="KW-0698">rRNA processing</keyword>
<comment type="function">
    <text evidence="1">Component of the RIX1 complex required for processing of ITS2 sequences from 35S pre-rRNA.</text>
</comment>
<comment type="subunit">
    <text evidence="1">Component of the RIX1 complex, composed of IPI1, RIX1/IPI2 and IPI3 in a 1:2:2 stoichiometry. The complex interacts (via RIX1) with MDN1 (via its hexameric AAA ATPase ring) and the pre-60S ribosome particles.</text>
</comment>
<comment type="subcellular location">
    <subcellularLocation>
        <location evidence="1">Nucleus</location>
    </subcellularLocation>
</comment>
<comment type="similarity">
    <text evidence="3">Belongs to the IPI1/TEX10 family.</text>
</comment>